<sequence length="207" mass="22895">MASSSGPISPTSLEMFKPGVEELNPSKLLLLSNHQEGMLYPTILGSLELLSFKRERSLSLQKDKVCLLHQESQLLKLRGTGTDTTDVLLKQPMATSVNCCHDGIFTIWEQDRMLKTSTAPILTESTGSLATRLMSIPRLTLSIGTQVAMRLFRLGFRLARYSLRVTILKAQEGLLLIPDLLRAHPAEPLVQDRAVEPILAIEPPPLV</sequence>
<gene>
    <name type="primary">N</name>
    <name type="synonym">I</name>
    <name type="ORF">7b</name>
</gene>
<feature type="chain" id="PRO_0000284099" description="Protein I">
    <location>
        <begin position="1"/>
        <end position="207"/>
    </location>
</feature>
<feature type="sequence variant" description="In strain: Isolate ATCC VR-759.">
    <location>
        <begin position="1"/>
        <end position="92"/>
    </location>
</feature>
<feature type="sequence variant" description="In strain: Isolate clinical OC43-Paris.">
    <original>L</original>
    <variation>P</variation>
    <location>
        <position position="30"/>
    </location>
</feature>
<feature type="sequence variant" description="In strain: Isolate ATCC VR-759 and Isolate clinical OC43-Paris.">
    <original>A</original>
    <variation>V</variation>
    <location>
        <position position="194"/>
    </location>
</feature>
<feature type="sequence variant" description="In strain: Isolate ATCC VR-759 and Isolate clinical OC43-Paris.">
    <original>P</original>
    <variation>L</variation>
    <location>
        <position position="204"/>
    </location>
</feature>
<protein>
    <recommendedName>
        <fullName>Protein I</fullName>
    </recommendedName>
    <alternativeName>
        <fullName>Accessory protein N2</fullName>
    </alternativeName>
    <alternativeName>
        <fullName>N internal ORF protein</fullName>
        <shortName>IORF</shortName>
    </alternativeName>
    <alternativeName>
        <fullName>Protein in nucleocapsid ORF</fullName>
    </alternativeName>
</protein>
<keyword id="KW-1185">Reference proteome</keyword>
<keyword id="KW-0946">Virion</keyword>
<organismHost>
    <name type="scientific">Homo sapiens</name>
    <name type="common">Human</name>
    <dbReference type="NCBI Taxonomy" id="9606"/>
</organismHost>
<comment type="function">
    <text evidence="1">Structural protein that is not essential for the viral replication either in tissue culture or in its natural host.</text>
</comment>
<comment type="subcellular location">
    <subcellularLocation>
        <location evidence="1">Virion</location>
    </subcellularLocation>
</comment>
<comment type="miscellaneous">
    <text>The gene encoding this protein is included within the N gene (alternative ORF).</text>
</comment>
<comment type="similarity">
    <text evidence="2">Belongs to the coronavirus I protein family.</text>
</comment>
<name>IORF_CVHOC</name>
<reference key="1">
    <citation type="journal article" date="2005" name="Virology">
        <title>Circulation of genetically distinct contemporary human coronavirus OC43 strains.</title>
        <authorList>
            <person name="Vijgen L."/>
            <person name="Keyaerts E."/>
            <person name="Lemey P."/>
            <person name="Moes E."/>
            <person name="Li S."/>
            <person name="Vandamme A.M."/>
            <person name="Van Ranst M."/>
        </authorList>
    </citation>
    <scope>NUCLEOTIDE SEQUENCE [GENOMIC RNA]</scope>
    <source>
        <strain>Isolate 19572 Belgium 2004</strain>
    </source>
</reference>
<reference key="2">
    <citation type="journal article" date="2004" name="J. Virol.">
        <title>Human respiratory coronavirus OC43: genetic stability and neuroinvasion.</title>
        <authorList>
            <person name="St Jean J.R."/>
            <person name="Jacomy H."/>
            <person name="Desforges M."/>
            <person name="Vabret A."/>
            <person name="Freymuth F."/>
            <person name="Talbot P.J."/>
        </authorList>
    </citation>
    <scope>NUCLEOTIDE SEQUENCE [GENOMIC RNA]</scope>
    <source>
        <strain>Isolate ATCC VR-759</strain>
        <strain>Isolate clinical OC43-Paris</strain>
    </source>
</reference>
<reference key="3">
    <citation type="journal article" date="2005" name="J. Virol.">
        <title>Complete genomic sequence of human coronavirus OC43: molecular clock analysis suggests a relatively recent zoonotic coronavirus transmission event.</title>
        <authorList>
            <person name="Vijgen L."/>
            <person name="Keyaerts E."/>
            <person name="Moes E."/>
            <person name="Thoelen I."/>
            <person name="Wollants E."/>
            <person name="Lemey P."/>
            <person name="Vandamme A.M."/>
            <person name="Van Ranst M."/>
        </authorList>
    </citation>
    <scope>NUCLEOTIDE SEQUENCE [GENOMIC RNA]</scope>
    <source>
        <strain>Isolate ATCC VR-759</strain>
    </source>
</reference>
<organism>
    <name type="scientific">Human coronavirus OC43</name>
    <name type="common">HCoV-OC43</name>
    <dbReference type="NCBI Taxonomy" id="31631"/>
    <lineage>
        <taxon>Viruses</taxon>
        <taxon>Riboviria</taxon>
        <taxon>Orthornavirae</taxon>
        <taxon>Pisuviricota</taxon>
        <taxon>Pisoniviricetes</taxon>
        <taxon>Nidovirales</taxon>
        <taxon>Cornidovirineae</taxon>
        <taxon>Coronaviridae</taxon>
        <taxon>Orthocoronavirinae</taxon>
        <taxon>Betacoronavirus</taxon>
        <taxon>Embecovirus</taxon>
        <taxon>Betacoronavirus 1</taxon>
    </lineage>
</organism>
<dbReference type="EMBL" id="AY903460">
    <property type="protein sequence ID" value="AAX85683.1"/>
    <property type="molecule type" value="Genomic_RNA"/>
</dbReference>
<dbReference type="EMBL" id="AY585228">
    <property type="status" value="NOT_ANNOTATED_CDS"/>
    <property type="molecule type" value="Genomic_RNA"/>
</dbReference>
<dbReference type="EMBL" id="AY585229">
    <property type="status" value="NOT_ANNOTATED_CDS"/>
    <property type="molecule type" value="Genomic_RNA"/>
</dbReference>
<dbReference type="EMBL" id="AY391777">
    <property type="protein sequence ID" value="AAR01020.1"/>
    <property type="status" value="ALT_SEQ"/>
    <property type="molecule type" value="Genomic_RNA"/>
</dbReference>
<dbReference type="Proteomes" id="UP000007552">
    <property type="component" value="Genome"/>
</dbReference>
<dbReference type="Proteomes" id="UP000100580">
    <property type="component" value="Genome"/>
</dbReference>
<dbReference type="Proteomes" id="UP000159995">
    <property type="component" value="Genome"/>
</dbReference>
<dbReference type="Proteomes" id="UP000180344">
    <property type="component" value="Genome"/>
</dbReference>
<dbReference type="GO" id="GO:0044423">
    <property type="term" value="C:virion component"/>
    <property type="evidence" value="ECO:0007669"/>
    <property type="project" value="UniProtKB-KW"/>
</dbReference>
<dbReference type="CDD" id="cd21662">
    <property type="entry name" value="embe-CoV_Protein-I_like"/>
    <property type="match status" value="1"/>
</dbReference>
<dbReference type="InterPro" id="IPR004876">
    <property type="entry name" value="Corona_nucI"/>
</dbReference>
<dbReference type="InterPro" id="IPR044311">
    <property type="entry name" value="N2-like_embe-CoV"/>
</dbReference>
<dbReference type="Pfam" id="PF03187">
    <property type="entry name" value="Corona_I"/>
    <property type="match status" value="1"/>
</dbReference>
<proteinExistence type="inferred from homology"/>
<accession>Q4VID0</accession>
<accession>Q6TNF4</accession>
<evidence type="ECO:0000250" key="1"/>
<evidence type="ECO:0000305" key="2"/>